<protein>
    <recommendedName>
        <fullName>Plasmid recombination enzyme</fullName>
    </recommendedName>
    <alternativeName>
        <fullName>GI2 site-specific recombinase</fullName>
    </alternativeName>
    <alternativeName>
        <fullName>Mobilization protein</fullName>
    </alternativeName>
</protein>
<accession>P10025</accession>
<reference key="1">
    <citation type="journal article" date="1988" name="Nucleic Acids Res.">
        <title>Complete nucleotide sequence of pGI2, a Bacillus thuringiensis plasmid containing Tn4430.</title>
        <authorList>
            <person name="Mahillon J."/>
            <person name="Seurinck J."/>
        </authorList>
    </citation>
    <scope>NUCLEOTIDE SEQUENCE [GENOMIC DNA]</scope>
    <source>
        <strain>H1.1</strain>
    </source>
</reference>
<name>PREA_BACTU</name>
<organism>
    <name type="scientific">Bacillus thuringiensis</name>
    <dbReference type="NCBI Taxonomy" id="1428"/>
    <lineage>
        <taxon>Bacteria</taxon>
        <taxon>Bacillati</taxon>
        <taxon>Bacillota</taxon>
        <taxon>Bacilli</taxon>
        <taxon>Bacillales</taxon>
        <taxon>Bacillaceae</taxon>
        <taxon>Bacillus</taxon>
        <taxon>Bacillus cereus group</taxon>
    </lineage>
</organism>
<proteinExistence type="inferred from homology"/>
<evidence type="ECO:0000255" key="1"/>
<evidence type="ECO:0000305" key="2"/>
<comment type="similarity">
    <text evidence="2">Belongs to the plasmid mobilization pre family.</text>
</comment>
<sequence length="445" mass="52816">MNKFAIIHMQKFQISDVQGIQKHNQRQGKSKSNLDIDYSKSEQNYDLLNQQKIRYESTIKQEISERVKRKPRANSVVLSEFVVTASPDYMHSLSLEEQKRYFESSLDFIQKRYGKQNTLYAMVHMDEATPHMHIGVMPITEDNRLSAKDMFTRKELISLQQDFPLEMREKGFDVDRGEGSEKKHLSPQAFKEKQDLEVEVEQLSNVKTHLKTKVVETHNQLQQTTNYIEKQNETLQKIQQQFLSLDKKIKEKKQEFETFRNQIPDKPVSMSYLREETKTEVTTKLFGKPEITEKKTGNIVVTREQWRDMTEKVNAAVIVKKDYERLQKTDLVKENQSLREDNKYLEETIKGNNLALKHSYKQNRELEEVNKELHTEIGTLKAHIRDLQMNIKVLYQQTKKVFKEQFKAFRGLIKNELDMKGVDNQFEREHTREIRSRQKGYDMER</sequence>
<keyword id="KW-0238">DNA-binding</keyword>
<keyword id="KW-0614">Plasmid</keyword>
<feature type="chain" id="PRO_0000068417" description="Plasmid recombination enzyme">
    <location>
        <begin position="1"/>
        <end position="445"/>
    </location>
</feature>
<feature type="binding site" evidence="1">
    <location>
        <position position="45"/>
    </location>
    <ligand>
        <name>DNA</name>
        <dbReference type="ChEBI" id="CHEBI:16991"/>
    </ligand>
</feature>
<feature type="binding site" evidence="1">
    <location>
        <position position="113"/>
    </location>
    <ligand>
        <name>DNA</name>
        <dbReference type="ChEBI" id="CHEBI:16991"/>
    </ligand>
</feature>
<dbReference type="EMBL" id="X13481">
    <property type="protein sequence ID" value="CAA31835.1"/>
    <property type="molecule type" value="Genomic_DNA"/>
</dbReference>
<dbReference type="PIR" id="S02050">
    <property type="entry name" value="RSBSMT"/>
</dbReference>
<dbReference type="RefSeq" id="WP_001031677.1">
    <property type="nucleotide sequence ID" value="NZ_VJWJ01000190.1"/>
</dbReference>
<dbReference type="SMR" id="P10025"/>
<dbReference type="GeneID" id="67470638"/>
<dbReference type="GO" id="GO:0003677">
    <property type="term" value="F:DNA binding"/>
    <property type="evidence" value="ECO:0007669"/>
    <property type="project" value="UniProtKB-KW"/>
</dbReference>
<dbReference type="GO" id="GO:0006310">
    <property type="term" value="P:DNA recombination"/>
    <property type="evidence" value="ECO:0007669"/>
    <property type="project" value="InterPro"/>
</dbReference>
<dbReference type="CDD" id="cd17242">
    <property type="entry name" value="MobM_relaxase"/>
    <property type="match status" value="1"/>
</dbReference>
<dbReference type="Gene3D" id="3.30.930.30">
    <property type="match status" value="1"/>
</dbReference>
<dbReference type="InterPro" id="IPR001668">
    <property type="entry name" value="Mob_Pre"/>
</dbReference>
<dbReference type="NCBIfam" id="NF041497">
    <property type="entry name" value="MobV"/>
    <property type="match status" value="1"/>
</dbReference>
<dbReference type="Pfam" id="PF01076">
    <property type="entry name" value="Mob_Pre"/>
    <property type="match status" value="1"/>
</dbReference>
<geneLocation type="plasmid">
    <name>pGI2</name>
</geneLocation>